<keyword id="KW-1003">Cell membrane</keyword>
<keyword id="KW-0472">Membrane</keyword>
<keyword id="KW-0560">Oxidoreductase</keyword>
<keyword id="KW-1185">Reference proteome</keyword>
<dbReference type="EC" id="1.1.98.-"/>
<dbReference type="EMBL" id="AL123456">
    <property type="protein sequence ID" value="CCP45989.1"/>
    <property type="molecule type" value="Genomic_DNA"/>
</dbReference>
<dbReference type="PIR" id="H70948">
    <property type="entry name" value="H70948"/>
</dbReference>
<dbReference type="RefSeq" id="NP_217694.1">
    <property type="nucleotide sequence ID" value="NC_000962.3"/>
</dbReference>
<dbReference type="RefSeq" id="WP_003416632.1">
    <property type="nucleotide sequence ID" value="NC_000962.3"/>
</dbReference>
<dbReference type="SMR" id="O53328"/>
<dbReference type="STRING" id="83332.Rv3178"/>
<dbReference type="PaxDb" id="83332-Rv3178"/>
<dbReference type="DNASU" id="888786"/>
<dbReference type="GeneID" id="888786"/>
<dbReference type="KEGG" id="mtu:Rv3178"/>
<dbReference type="KEGG" id="mtv:RVBD_3178"/>
<dbReference type="TubercuList" id="Rv3178"/>
<dbReference type="eggNOG" id="COG0748">
    <property type="taxonomic scope" value="Bacteria"/>
</dbReference>
<dbReference type="InParanoid" id="O53328"/>
<dbReference type="OrthoDB" id="8225825at2"/>
<dbReference type="PhylomeDB" id="O53328"/>
<dbReference type="Proteomes" id="UP000001584">
    <property type="component" value="Chromosome"/>
</dbReference>
<dbReference type="GO" id="GO:0005886">
    <property type="term" value="C:plasma membrane"/>
    <property type="evidence" value="ECO:0007669"/>
    <property type="project" value="UniProtKB-SubCell"/>
</dbReference>
<dbReference type="GO" id="GO:0070967">
    <property type="term" value="F:coenzyme F420 binding"/>
    <property type="evidence" value="ECO:0000318"/>
    <property type="project" value="GO_Central"/>
</dbReference>
<dbReference type="GO" id="GO:0016491">
    <property type="term" value="F:oxidoreductase activity"/>
    <property type="evidence" value="ECO:0007669"/>
    <property type="project" value="UniProtKB-KW"/>
</dbReference>
<dbReference type="Gene3D" id="2.30.110.10">
    <property type="entry name" value="Electron Transport, Fmn-binding Protein, Chain A"/>
    <property type="match status" value="1"/>
</dbReference>
<dbReference type="InterPro" id="IPR004378">
    <property type="entry name" value="F420H2_quin_Rdtase"/>
</dbReference>
<dbReference type="InterPro" id="IPR012349">
    <property type="entry name" value="Split_barrel_FMN-bd"/>
</dbReference>
<dbReference type="NCBIfam" id="TIGR00026">
    <property type="entry name" value="hi_GC_TIGR00026"/>
    <property type="match status" value="1"/>
</dbReference>
<dbReference type="PANTHER" id="PTHR39428:SF3">
    <property type="entry name" value="DEAZAFLAVIN-DEPENDENT NITROREDUCTASE"/>
    <property type="match status" value="1"/>
</dbReference>
<dbReference type="PANTHER" id="PTHR39428">
    <property type="entry name" value="F420H(2)-DEPENDENT QUINONE REDUCTASE RV1261C"/>
    <property type="match status" value="1"/>
</dbReference>
<dbReference type="Pfam" id="PF04075">
    <property type="entry name" value="F420H2_quin_red"/>
    <property type="match status" value="1"/>
</dbReference>
<feature type="chain" id="PRO_0000399508" description="Putative F420H(2)-dependent quinone reductase Rv3178">
    <location>
        <begin position="1"/>
        <end position="119"/>
    </location>
</feature>
<feature type="binding site" evidence="1">
    <location>
        <begin position="21"/>
        <end position="23"/>
    </location>
    <ligand>
        <name>coenzyme F420-(gamma-Glu)n</name>
        <dbReference type="ChEBI" id="CHEBI:133980"/>
    </ligand>
</feature>
<feature type="binding site" evidence="1">
    <location>
        <begin position="27"/>
        <end position="32"/>
    </location>
    <ligand>
        <name>coenzyme F420-(gamma-Glu)n</name>
        <dbReference type="ChEBI" id="CHEBI:133980"/>
    </ligand>
</feature>
<feature type="binding site" evidence="1">
    <location>
        <begin position="43"/>
        <end position="46"/>
    </location>
    <ligand>
        <name>coenzyme F420-(gamma-Glu)n</name>
        <dbReference type="ChEBI" id="CHEBI:133980"/>
    </ligand>
</feature>
<feature type="binding site" evidence="1">
    <location>
        <begin position="54"/>
        <end position="58"/>
    </location>
    <ligand>
        <name>coenzyme F420-(gamma-Glu)n</name>
        <dbReference type="ChEBI" id="CHEBI:133980"/>
    </ligand>
</feature>
<gene>
    <name type="ordered locus">Rv3178</name>
</gene>
<evidence type="ECO:0000250" key="1">
    <source>
        <dbReference type="UniProtKB" id="P9WP15"/>
    </source>
</evidence>
<evidence type="ECO:0000305" key="2"/>
<accession>O53328</accession>
<accession>L0TET4</accession>
<protein>
    <recommendedName>
        <fullName evidence="2">Putative F420H(2)-dependent quinone reductase Rv3178</fullName>
        <shortName>Fqr</shortName>
        <ecNumber>1.1.98.-</ecNumber>
    </recommendedName>
</protein>
<name>FQR78_MYCTU</name>
<sequence length="119" mass="13497">MRLGAGFRKPVPTLLLEHRSRKSGKNFVAPLLYITDRNNVIVVASALGQAENPQWYRNLPPNPDTHIQIGSDRRPVRAVVASSDERARLWPRPVDAYADFDSCQSWTERGIPVIILRPR</sequence>
<comment type="function">
    <text evidence="1">Involved in a F420-dependent anti-oxidant mechanism that protects M.tuberculosis against oxidative stress and bactericidal agents. Catalyzes the F420H(2)-dependent two-electron reduction of quinones to dihydroquinones, thereby preventing the formation of cytotoxic semiquinones obtained by the one-electron reduction pathway. Since menaquinone is the sole quinone electron carrier in the respiratory chain in M.tuberculosis, the physiological electron acceptor for Fqr-mediated F420H(2) oxidation is therefore likely to be the endogenous menaquinone found in the membrane fraction of M.tuberculosis.</text>
</comment>
<comment type="catalytic activity">
    <reaction evidence="1">
        <text>oxidized coenzyme F420-(gamma-L-Glu)(n) + a quinol + H(+) = reduced coenzyme F420-(gamma-L-Glu)(n) + a quinone</text>
        <dbReference type="Rhea" id="RHEA:39663"/>
        <dbReference type="Rhea" id="RHEA-COMP:12939"/>
        <dbReference type="Rhea" id="RHEA-COMP:14378"/>
        <dbReference type="ChEBI" id="CHEBI:15378"/>
        <dbReference type="ChEBI" id="CHEBI:24646"/>
        <dbReference type="ChEBI" id="CHEBI:132124"/>
        <dbReference type="ChEBI" id="CHEBI:133980"/>
        <dbReference type="ChEBI" id="CHEBI:139511"/>
    </reaction>
</comment>
<comment type="subcellular location">
    <subcellularLocation>
        <location evidence="1">Cell membrane</location>
        <topology evidence="1">Peripheral membrane protein</topology>
    </subcellularLocation>
</comment>
<comment type="similarity">
    <text evidence="2">Belongs to the F420H(2)-dependent quinone reductase family.</text>
</comment>
<proteinExistence type="inferred from homology"/>
<reference key="1">
    <citation type="journal article" date="1998" name="Nature">
        <title>Deciphering the biology of Mycobacterium tuberculosis from the complete genome sequence.</title>
        <authorList>
            <person name="Cole S.T."/>
            <person name="Brosch R."/>
            <person name="Parkhill J."/>
            <person name="Garnier T."/>
            <person name="Churcher C.M."/>
            <person name="Harris D.E."/>
            <person name="Gordon S.V."/>
            <person name="Eiglmeier K."/>
            <person name="Gas S."/>
            <person name="Barry C.E. III"/>
            <person name="Tekaia F."/>
            <person name="Badcock K."/>
            <person name="Basham D."/>
            <person name="Brown D."/>
            <person name="Chillingworth T."/>
            <person name="Connor R."/>
            <person name="Davies R.M."/>
            <person name="Devlin K."/>
            <person name="Feltwell T."/>
            <person name="Gentles S."/>
            <person name="Hamlin N."/>
            <person name="Holroyd S."/>
            <person name="Hornsby T."/>
            <person name="Jagels K."/>
            <person name="Krogh A."/>
            <person name="McLean J."/>
            <person name="Moule S."/>
            <person name="Murphy L.D."/>
            <person name="Oliver S."/>
            <person name="Osborne J."/>
            <person name="Quail M.A."/>
            <person name="Rajandream M.A."/>
            <person name="Rogers J."/>
            <person name="Rutter S."/>
            <person name="Seeger K."/>
            <person name="Skelton S."/>
            <person name="Squares S."/>
            <person name="Squares R."/>
            <person name="Sulston J.E."/>
            <person name="Taylor K."/>
            <person name="Whitehead S."/>
            <person name="Barrell B.G."/>
        </authorList>
    </citation>
    <scope>NUCLEOTIDE SEQUENCE [LARGE SCALE GENOMIC DNA]</scope>
    <source>
        <strain>ATCC 25618 / H37Rv</strain>
    </source>
</reference>
<organism>
    <name type="scientific">Mycobacterium tuberculosis (strain ATCC 25618 / H37Rv)</name>
    <dbReference type="NCBI Taxonomy" id="83332"/>
    <lineage>
        <taxon>Bacteria</taxon>
        <taxon>Bacillati</taxon>
        <taxon>Actinomycetota</taxon>
        <taxon>Actinomycetes</taxon>
        <taxon>Mycobacteriales</taxon>
        <taxon>Mycobacteriaceae</taxon>
        <taxon>Mycobacterium</taxon>
        <taxon>Mycobacterium tuberculosis complex</taxon>
    </lineage>
</organism>